<proteinExistence type="inferred from homology"/>
<organism>
    <name type="scientific">Bacillus cereus (strain Q1)</name>
    <dbReference type="NCBI Taxonomy" id="361100"/>
    <lineage>
        <taxon>Bacteria</taxon>
        <taxon>Bacillati</taxon>
        <taxon>Bacillota</taxon>
        <taxon>Bacilli</taxon>
        <taxon>Bacillales</taxon>
        <taxon>Bacillaceae</taxon>
        <taxon>Bacillus</taxon>
        <taxon>Bacillus cereus group</taxon>
    </lineage>
</organism>
<reference key="1">
    <citation type="journal article" date="2009" name="J. Bacteriol.">
        <title>Complete genome sequence of the extremophilic Bacillus cereus strain Q1 with industrial applications.</title>
        <authorList>
            <person name="Xiong Z."/>
            <person name="Jiang Y."/>
            <person name="Qi D."/>
            <person name="Lu H."/>
            <person name="Yang F."/>
            <person name="Yang J."/>
            <person name="Chen L."/>
            <person name="Sun L."/>
            <person name="Xu X."/>
            <person name="Xue Y."/>
            <person name="Zhu Y."/>
            <person name="Jin Q."/>
        </authorList>
    </citation>
    <scope>NUCLEOTIDE SEQUENCE [LARGE SCALE GENOMIC DNA]</scope>
    <source>
        <strain>Q1</strain>
    </source>
</reference>
<protein>
    <recommendedName>
        <fullName evidence="1">Anti-sigma F factor</fullName>
        <ecNumber evidence="1">2.7.11.1</ecNumber>
    </recommendedName>
    <alternativeName>
        <fullName evidence="1">Stage II sporulation protein AB</fullName>
    </alternativeName>
</protein>
<keyword id="KW-0067">ATP-binding</keyword>
<keyword id="KW-0418">Kinase</keyword>
<keyword id="KW-0547">Nucleotide-binding</keyword>
<keyword id="KW-0723">Serine/threonine-protein kinase</keyword>
<keyword id="KW-0749">Sporulation</keyword>
<keyword id="KW-0808">Transferase</keyword>
<gene>
    <name evidence="1" type="primary">spoIIAB</name>
    <name type="ordered locus">BCQ_3864</name>
</gene>
<dbReference type="EC" id="2.7.11.1" evidence="1"/>
<dbReference type="EMBL" id="CP000227">
    <property type="protein sequence ID" value="ACM14292.1"/>
    <property type="molecule type" value="Genomic_DNA"/>
</dbReference>
<dbReference type="SMR" id="B9IWT7"/>
<dbReference type="KEGG" id="bcq:BCQ_3864"/>
<dbReference type="HOGENOM" id="CLU_090336_11_0_9"/>
<dbReference type="Proteomes" id="UP000000441">
    <property type="component" value="Chromosome"/>
</dbReference>
<dbReference type="GO" id="GO:0005524">
    <property type="term" value="F:ATP binding"/>
    <property type="evidence" value="ECO:0007669"/>
    <property type="project" value="UniProtKB-KW"/>
</dbReference>
<dbReference type="GO" id="GO:0106310">
    <property type="term" value="F:protein serine kinase activity"/>
    <property type="evidence" value="ECO:0007669"/>
    <property type="project" value="RHEA"/>
</dbReference>
<dbReference type="GO" id="GO:0004674">
    <property type="term" value="F:protein serine/threonine kinase activity"/>
    <property type="evidence" value="ECO:0007669"/>
    <property type="project" value="UniProtKB-KW"/>
</dbReference>
<dbReference type="GO" id="GO:0016989">
    <property type="term" value="F:sigma factor antagonist activity"/>
    <property type="evidence" value="ECO:0007669"/>
    <property type="project" value="InterPro"/>
</dbReference>
<dbReference type="GO" id="GO:0030436">
    <property type="term" value="P:asexual sporulation"/>
    <property type="evidence" value="ECO:0007669"/>
    <property type="project" value="UniProtKB-UniRule"/>
</dbReference>
<dbReference type="GO" id="GO:0042174">
    <property type="term" value="P:negative regulation of sporulation resulting in formation of a cellular spore"/>
    <property type="evidence" value="ECO:0007669"/>
    <property type="project" value="InterPro"/>
</dbReference>
<dbReference type="GO" id="GO:0030435">
    <property type="term" value="P:sporulation resulting in formation of a cellular spore"/>
    <property type="evidence" value="ECO:0007669"/>
    <property type="project" value="UniProtKB-KW"/>
</dbReference>
<dbReference type="FunFam" id="3.30.565.10:FF:000022">
    <property type="entry name" value="Anti-sigma F factor"/>
    <property type="match status" value="1"/>
</dbReference>
<dbReference type="Gene3D" id="3.30.565.10">
    <property type="entry name" value="Histidine kinase-like ATPase, C-terminal domain"/>
    <property type="match status" value="1"/>
</dbReference>
<dbReference type="HAMAP" id="MF_00637">
    <property type="entry name" value="Anti_sigma_F"/>
    <property type="match status" value="1"/>
</dbReference>
<dbReference type="InterPro" id="IPR050267">
    <property type="entry name" value="Anti-sigma-factor_SerPK"/>
</dbReference>
<dbReference type="InterPro" id="IPR010194">
    <property type="entry name" value="Anti-sigma_F"/>
</dbReference>
<dbReference type="InterPro" id="IPR036890">
    <property type="entry name" value="HATPase_C_sf"/>
</dbReference>
<dbReference type="NCBIfam" id="TIGR01925">
    <property type="entry name" value="spIIAB"/>
    <property type="match status" value="1"/>
</dbReference>
<dbReference type="PANTHER" id="PTHR35526:SF3">
    <property type="entry name" value="ANTI-SIGMA-F FACTOR RSBW"/>
    <property type="match status" value="1"/>
</dbReference>
<dbReference type="PANTHER" id="PTHR35526">
    <property type="entry name" value="ANTI-SIGMA-F FACTOR RSBW-RELATED"/>
    <property type="match status" value="1"/>
</dbReference>
<dbReference type="Pfam" id="PF13581">
    <property type="entry name" value="HATPase_c_2"/>
    <property type="match status" value="1"/>
</dbReference>
<dbReference type="SMART" id="SM00387">
    <property type="entry name" value="HATPase_c"/>
    <property type="match status" value="1"/>
</dbReference>
<dbReference type="SUPFAM" id="SSF55874">
    <property type="entry name" value="ATPase domain of HSP90 chaperone/DNA topoisomerase II/histidine kinase"/>
    <property type="match status" value="1"/>
</dbReference>
<comment type="function">
    <text evidence="1">Binds to sigma F and blocks its ability to form an RNA polymerase holoenzyme (E-sigma F). Phosphorylates SpoIIAA on a serine residue. This phosphorylation may enable SpoIIAA to act as an anti-anti-sigma factor that counteracts SpoIIAB and thus releases sigma F from inhibition.</text>
</comment>
<comment type="catalytic activity">
    <reaction evidence="1">
        <text>L-seryl-[protein] + ATP = O-phospho-L-seryl-[protein] + ADP + H(+)</text>
        <dbReference type="Rhea" id="RHEA:17989"/>
        <dbReference type="Rhea" id="RHEA-COMP:9863"/>
        <dbReference type="Rhea" id="RHEA-COMP:11604"/>
        <dbReference type="ChEBI" id="CHEBI:15378"/>
        <dbReference type="ChEBI" id="CHEBI:29999"/>
        <dbReference type="ChEBI" id="CHEBI:30616"/>
        <dbReference type="ChEBI" id="CHEBI:83421"/>
        <dbReference type="ChEBI" id="CHEBI:456216"/>
        <dbReference type="EC" id="2.7.11.1"/>
    </reaction>
</comment>
<comment type="catalytic activity">
    <reaction evidence="1">
        <text>L-threonyl-[protein] + ATP = O-phospho-L-threonyl-[protein] + ADP + H(+)</text>
        <dbReference type="Rhea" id="RHEA:46608"/>
        <dbReference type="Rhea" id="RHEA-COMP:11060"/>
        <dbReference type="Rhea" id="RHEA-COMP:11605"/>
        <dbReference type="ChEBI" id="CHEBI:15378"/>
        <dbReference type="ChEBI" id="CHEBI:30013"/>
        <dbReference type="ChEBI" id="CHEBI:30616"/>
        <dbReference type="ChEBI" id="CHEBI:61977"/>
        <dbReference type="ChEBI" id="CHEBI:456216"/>
        <dbReference type="EC" id="2.7.11.1"/>
    </reaction>
</comment>
<comment type="similarity">
    <text evidence="1">Belongs to the anti-sigma-factor family.</text>
</comment>
<accession>B9IWT7</accession>
<sequence length="146" mass="16246">MRNEMNLQFSALSQNESFARVTVAAFIAQLDPTMEELTEIKTVVSEAVTNAIIHGYEGNAEGVVYISVILEEAMVKLTIRDEGIGIFNLDEARQPLFTTKPELERSGMGFTIMENFMDEVEVISNESFGTTIHLTKYLSNSNALCN</sequence>
<evidence type="ECO:0000255" key="1">
    <source>
        <dbReference type="HAMAP-Rule" id="MF_00637"/>
    </source>
</evidence>
<feature type="chain" id="PRO_1000147382" description="Anti-sigma F factor">
    <location>
        <begin position="1"/>
        <end position="146"/>
    </location>
</feature>
<name>SP2AB_BACCQ</name>